<evidence type="ECO:0000255" key="1">
    <source>
        <dbReference type="HAMAP-Rule" id="MF_01850"/>
    </source>
</evidence>
<dbReference type="EC" id="2.8.1.-" evidence="1"/>
<dbReference type="EMBL" id="CP000482">
    <property type="protein sequence ID" value="ABL01092.1"/>
    <property type="molecule type" value="Genomic_DNA"/>
</dbReference>
<dbReference type="SMR" id="A1AUS1"/>
<dbReference type="STRING" id="338966.Ppro_3499"/>
<dbReference type="KEGG" id="ppd:Ppro_3499"/>
<dbReference type="eggNOG" id="COG0037">
    <property type="taxonomic scope" value="Bacteria"/>
</dbReference>
<dbReference type="HOGENOM" id="CLU_026481_0_0_7"/>
<dbReference type="OrthoDB" id="9801054at2"/>
<dbReference type="Proteomes" id="UP000006732">
    <property type="component" value="Chromosome"/>
</dbReference>
<dbReference type="GO" id="GO:0005737">
    <property type="term" value="C:cytoplasm"/>
    <property type="evidence" value="ECO:0007669"/>
    <property type="project" value="UniProtKB-SubCell"/>
</dbReference>
<dbReference type="GO" id="GO:0051539">
    <property type="term" value="F:4 iron, 4 sulfur cluster binding"/>
    <property type="evidence" value="ECO:0007669"/>
    <property type="project" value="UniProtKB-KW"/>
</dbReference>
<dbReference type="GO" id="GO:0005524">
    <property type="term" value="F:ATP binding"/>
    <property type="evidence" value="ECO:0007669"/>
    <property type="project" value="UniProtKB-KW"/>
</dbReference>
<dbReference type="GO" id="GO:0046872">
    <property type="term" value="F:metal ion binding"/>
    <property type="evidence" value="ECO:0007669"/>
    <property type="project" value="UniProtKB-KW"/>
</dbReference>
<dbReference type="GO" id="GO:0016740">
    <property type="term" value="F:transferase activity"/>
    <property type="evidence" value="ECO:0007669"/>
    <property type="project" value="UniProtKB-KW"/>
</dbReference>
<dbReference type="GO" id="GO:0000049">
    <property type="term" value="F:tRNA binding"/>
    <property type="evidence" value="ECO:0007669"/>
    <property type="project" value="UniProtKB-KW"/>
</dbReference>
<dbReference type="GO" id="GO:0006400">
    <property type="term" value="P:tRNA modification"/>
    <property type="evidence" value="ECO:0007669"/>
    <property type="project" value="UniProtKB-ARBA"/>
</dbReference>
<dbReference type="CDD" id="cd24138">
    <property type="entry name" value="TtcA-like"/>
    <property type="match status" value="1"/>
</dbReference>
<dbReference type="Gene3D" id="3.40.50.620">
    <property type="entry name" value="HUPs"/>
    <property type="match status" value="1"/>
</dbReference>
<dbReference type="HAMAP" id="MF_01850">
    <property type="entry name" value="TtcA"/>
    <property type="match status" value="1"/>
</dbReference>
<dbReference type="InterPro" id="IPR014729">
    <property type="entry name" value="Rossmann-like_a/b/a_fold"/>
</dbReference>
<dbReference type="InterPro" id="IPR011063">
    <property type="entry name" value="TilS/TtcA_N"/>
</dbReference>
<dbReference type="InterPro" id="IPR012089">
    <property type="entry name" value="tRNA_Cyd_32_2_STrfase"/>
</dbReference>
<dbReference type="InterPro" id="IPR035107">
    <property type="entry name" value="tRNA_thiolation_TtcA_Ctu1"/>
</dbReference>
<dbReference type="NCBIfam" id="NF007972">
    <property type="entry name" value="PRK10696.1"/>
    <property type="match status" value="1"/>
</dbReference>
<dbReference type="PANTHER" id="PTHR43686:SF1">
    <property type="entry name" value="AMINOTRAN_5 DOMAIN-CONTAINING PROTEIN"/>
    <property type="match status" value="1"/>
</dbReference>
<dbReference type="PANTHER" id="PTHR43686">
    <property type="entry name" value="SULFURTRANSFERASE-RELATED"/>
    <property type="match status" value="1"/>
</dbReference>
<dbReference type="Pfam" id="PF01171">
    <property type="entry name" value="ATP_bind_3"/>
    <property type="match status" value="1"/>
</dbReference>
<dbReference type="PIRSF" id="PIRSF004976">
    <property type="entry name" value="ATPase_YdaO"/>
    <property type="match status" value="1"/>
</dbReference>
<dbReference type="SUPFAM" id="SSF52402">
    <property type="entry name" value="Adenine nucleotide alpha hydrolases-like"/>
    <property type="match status" value="1"/>
</dbReference>
<organism>
    <name type="scientific">Pelobacter propionicus (strain DSM 2379 / NBRC 103807 / OttBd1)</name>
    <dbReference type="NCBI Taxonomy" id="338966"/>
    <lineage>
        <taxon>Bacteria</taxon>
        <taxon>Pseudomonadati</taxon>
        <taxon>Thermodesulfobacteriota</taxon>
        <taxon>Desulfuromonadia</taxon>
        <taxon>Desulfuromonadales</taxon>
        <taxon>Desulfuromonadaceae</taxon>
        <taxon>Pelobacter</taxon>
    </lineage>
</organism>
<proteinExistence type="inferred from homology"/>
<feature type="chain" id="PRO_0000348783" description="tRNA-cytidine(32) 2-sulfurtransferase">
    <location>
        <begin position="1"/>
        <end position="269"/>
    </location>
</feature>
<feature type="short sequence motif" description="PP-loop motif" evidence="1">
    <location>
        <begin position="53"/>
        <end position="58"/>
    </location>
</feature>
<feature type="binding site" evidence="1">
    <location>
        <position position="128"/>
    </location>
    <ligand>
        <name>[4Fe-4S] cluster</name>
        <dbReference type="ChEBI" id="CHEBI:49883"/>
    </ligand>
</feature>
<feature type="binding site" evidence="1">
    <location>
        <position position="131"/>
    </location>
    <ligand>
        <name>[4Fe-4S] cluster</name>
        <dbReference type="ChEBI" id="CHEBI:49883"/>
    </ligand>
</feature>
<feature type="binding site" evidence="1">
    <location>
        <position position="218"/>
    </location>
    <ligand>
        <name>[4Fe-4S] cluster</name>
        <dbReference type="ChEBI" id="CHEBI:49883"/>
    </ligand>
</feature>
<comment type="function">
    <text evidence="1">Catalyzes the ATP-dependent 2-thiolation of cytidine in position 32 of tRNA, to form 2-thiocytidine (s(2)C32). The sulfur atoms are provided by the cysteine/cysteine desulfurase (IscS) system.</text>
</comment>
<comment type="catalytic activity">
    <reaction evidence="1">
        <text>cytidine(32) in tRNA + S-sulfanyl-L-cysteinyl-[cysteine desulfurase] + AH2 + ATP = 2-thiocytidine(32) in tRNA + L-cysteinyl-[cysteine desulfurase] + A + AMP + diphosphate + H(+)</text>
        <dbReference type="Rhea" id="RHEA:57048"/>
        <dbReference type="Rhea" id="RHEA-COMP:10288"/>
        <dbReference type="Rhea" id="RHEA-COMP:12157"/>
        <dbReference type="Rhea" id="RHEA-COMP:12158"/>
        <dbReference type="Rhea" id="RHEA-COMP:14821"/>
        <dbReference type="ChEBI" id="CHEBI:13193"/>
        <dbReference type="ChEBI" id="CHEBI:15378"/>
        <dbReference type="ChEBI" id="CHEBI:17499"/>
        <dbReference type="ChEBI" id="CHEBI:29950"/>
        <dbReference type="ChEBI" id="CHEBI:30616"/>
        <dbReference type="ChEBI" id="CHEBI:33019"/>
        <dbReference type="ChEBI" id="CHEBI:61963"/>
        <dbReference type="ChEBI" id="CHEBI:82748"/>
        <dbReference type="ChEBI" id="CHEBI:141453"/>
        <dbReference type="ChEBI" id="CHEBI:456215"/>
    </reaction>
    <physiologicalReaction direction="left-to-right" evidence="1">
        <dbReference type="Rhea" id="RHEA:57049"/>
    </physiologicalReaction>
</comment>
<comment type="cofactor">
    <cofactor evidence="1">
        <name>Mg(2+)</name>
        <dbReference type="ChEBI" id="CHEBI:18420"/>
    </cofactor>
</comment>
<comment type="cofactor">
    <cofactor evidence="1">
        <name>[4Fe-4S] cluster</name>
        <dbReference type="ChEBI" id="CHEBI:49883"/>
    </cofactor>
    <text evidence="1">Binds 1 [4Fe-4S] cluster per subunit. The cluster is chelated by three Cys residues, the fourth Fe has a free coordination site that may bind a sulfur atom transferred from the persulfide of IscS.</text>
</comment>
<comment type="pathway">
    <text evidence="1">tRNA modification.</text>
</comment>
<comment type="subunit">
    <text evidence="1">Homodimer.</text>
</comment>
<comment type="subcellular location">
    <subcellularLocation>
        <location evidence="1">Cytoplasm</location>
    </subcellularLocation>
</comment>
<comment type="miscellaneous">
    <text evidence="1">The thiolation reaction likely consists of two steps: a first activation step by ATP to form an adenylated intermediate of the target base of tRNA, and a second nucleophilic substitution step of the sulfur (S) atom supplied by the hydrosulfide attached to the Fe-S cluster.</text>
</comment>
<comment type="similarity">
    <text evidence="1">Belongs to the TtcA family.</text>
</comment>
<name>TTCA_PELPD</name>
<sequence length="269" mass="30035">MLRTPKAASDPMTLTQQEMRELPLFRRLRHAVGKAVADFAMIREGDRIAVGVSGGKDSYTLLLLLEELRRRAPIDFQLVAVIIDSGYPGYRGDIVRDYVTSLGIPCHLETTTHYEIITEKRRPGSSYCSICARLKRGALYGLADSLGCNKLALGHHGDDFIETLLLNQFFVGSLKAMSANMLADNGRTTVIRPLVYASEEEIVDFMGQVGLPVVSCNCPVSDSTDLKRRRMKELLKELEQEIPHIRSSMLKALSNVHPRHLLDQQLQGL</sequence>
<accession>A1AUS1</accession>
<reference key="1">
    <citation type="submission" date="2006-10" db="EMBL/GenBank/DDBJ databases">
        <title>Complete sequence of chromosome of Pelobacter propionicus DSM 2379.</title>
        <authorList>
            <consortium name="US DOE Joint Genome Institute"/>
            <person name="Copeland A."/>
            <person name="Lucas S."/>
            <person name="Lapidus A."/>
            <person name="Barry K."/>
            <person name="Detter J.C."/>
            <person name="Glavina del Rio T."/>
            <person name="Hammon N."/>
            <person name="Israni S."/>
            <person name="Dalin E."/>
            <person name="Tice H."/>
            <person name="Pitluck S."/>
            <person name="Saunders E."/>
            <person name="Brettin T."/>
            <person name="Bruce D."/>
            <person name="Han C."/>
            <person name="Tapia R."/>
            <person name="Schmutz J."/>
            <person name="Larimer F."/>
            <person name="Land M."/>
            <person name="Hauser L."/>
            <person name="Kyrpides N."/>
            <person name="Kim E."/>
            <person name="Lovley D."/>
            <person name="Richardson P."/>
        </authorList>
    </citation>
    <scope>NUCLEOTIDE SEQUENCE [LARGE SCALE GENOMIC DNA]</scope>
    <source>
        <strain>DSM 2379 / NBRC 103807 / OttBd1</strain>
    </source>
</reference>
<keyword id="KW-0004">4Fe-4S</keyword>
<keyword id="KW-0067">ATP-binding</keyword>
<keyword id="KW-0963">Cytoplasm</keyword>
<keyword id="KW-0408">Iron</keyword>
<keyword id="KW-0411">Iron-sulfur</keyword>
<keyword id="KW-0460">Magnesium</keyword>
<keyword id="KW-0479">Metal-binding</keyword>
<keyword id="KW-0547">Nucleotide-binding</keyword>
<keyword id="KW-1185">Reference proteome</keyword>
<keyword id="KW-0694">RNA-binding</keyword>
<keyword id="KW-0808">Transferase</keyword>
<keyword id="KW-0819">tRNA processing</keyword>
<keyword id="KW-0820">tRNA-binding</keyword>
<gene>
    <name evidence="1" type="primary">ttcA</name>
    <name type="ordered locus">Ppro_3499</name>
</gene>
<protein>
    <recommendedName>
        <fullName evidence="1">tRNA-cytidine(32) 2-sulfurtransferase</fullName>
        <ecNumber evidence="1">2.8.1.-</ecNumber>
    </recommendedName>
    <alternativeName>
        <fullName evidence="1">Two-thiocytidine biosynthesis protein A</fullName>
    </alternativeName>
    <alternativeName>
        <fullName evidence="1">tRNA 2-thiocytidine biosynthesis protein TtcA</fullName>
    </alternativeName>
</protein>